<organism>
    <name type="scientific">Helicobacter pylori (strain J99 / ATCC 700824)</name>
    <name type="common">Campylobacter pylori J99</name>
    <dbReference type="NCBI Taxonomy" id="85963"/>
    <lineage>
        <taxon>Bacteria</taxon>
        <taxon>Pseudomonadati</taxon>
        <taxon>Campylobacterota</taxon>
        <taxon>Epsilonproteobacteria</taxon>
        <taxon>Campylobacterales</taxon>
        <taxon>Helicobacteraceae</taxon>
        <taxon>Helicobacter</taxon>
    </lineage>
</organism>
<evidence type="ECO:0000255" key="1">
    <source>
        <dbReference type="HAMAP-Rule" id="MF_00454"/>
    </source>
</evidence>
<accession>Q9ZK01</accession>
<dbReference type="EMBL" id="AE001439">
    <property type="protein sequence ID" value="AAD06719.1"/>
    <property type="molecule type" value="Genomic_DNA"/>
</dbReference>
<dbReference type="PIR" id="D71843">
    <property type="entry name" value="D71843"/>
</dbReference>
<dbReference type="RefSeq" id="WP_001054931.1">
    <property type="nucleotide sequence ID" value="NC_000921.1"/>
</dbReference>
<dbReference type="SMR" id="Q9ZK01"/>
<dbReference type="KEGG" id="hpj:jhp_1146"/>
<dbReference type="PATRIC" id="fig|85963.30.peg.1430"/>
<dbReference type="eggNOG" id="COG0239">
    <property type="taxonomic scope" value="Bacteria"/>
</dbReference>
<dbReference type="Proteomes" id="UP000000804">
    <property type="component" value="Chromosome"/>
</dbReference>
<dbReference type="GO" id="GO:0005886">
    <property type="term" value="C:plasma membrane"/>
    <property type="evidence" value="ECO:0007669"/>
    <property type="project" value="UniProtKB-SubCell"/>
</dbReference>
<dbReference type="GO" id="GO:0062054">
    <property type="term" value="F:fluoride channel activity"/>
    <property type="evidence" value="ECO:0007669"/>
    <property type="project" value="UniProtKB-UniRule"/>
</dbReference>
<dbReference type="GO" id="GO:0046872">
    <property type="term" value="F:metal ion binding"/>
    <property type="evidence" value="ECO:0007669"/>
    <property type="project" value="UniProtKB-KW"/>
</dbReference>
<dbReference type="GO" id="GO:0140114">
    <property type="term" value="P:cellular detoxification of fluoride"/>
    <property type="evidence" value="ECO:0007669"/>
    <property type="project" value="UniProtKB-UniRule"/>
</dbReference>
<dbReference type="HAMAP" id="MF_00454">
    <property type="entry name" value="FluC"/>
    <property type="match status" value="1"/>
</dbReference>
<dbReference type="InterPro" id="IPR003691">
    <property type="entry name" value="FluC"/>
</dbReference>
<dbReference type="NCBIfam" id="TIGR00494">
    <property type="entry name" value="crcB"/>
    <property type="match status" value="1"/>
</dbReference>
<dbReference type="PANTHER" id="PTHR28259">
    <property type="entry name" value="FLUORIDE EXPORT PROTEIN 1-RELATED"/>
    <property type="match status" value="1"/>
</dbReference>
<dbReference type="PANTHER" id="PTHR28259:SF18">
    <property type="entry name" value="FLUORIDE-SPECIFIC ION CHANNEL FLUC"/>
    <property type="match status" value="1"/>
</dbReference>
<dbReference type="Pfam" id="PF02537">
    <property type="entry name" value="CRCB"/>
    <property type="match status" value="1"/>
</dbReference>
<feature type="chain" id="PRO_0000110110" description="Fluoride-specific ion channel FluC">
    <location>
        <begin position="1"/>
        <end position="130"/>
    </location>
</feature>
<feature type="transmembrane region" description="Helical" evidence="1">
    <location>
        <begin position="3"/>
        <end position="23"/>
    </location>
</feature>
<feature type="transmembrane region" description="Helical" evidence="1">
    <location>
        <begin position="38"/>
        <end position="58"/>
    </location>
</feature>
<feature type="transmembrane region" description="Helical" evidence="1">
    <location>
        <begin position="67"/>
        <end position="87"/>
    </location>
</feature>
<feature type="transmembrane region" description="Helical" evidence="1">
    <location>
        <begin position="102"/>
        <end position="122"/>
    </location>
</feature>
<feature type="binding site" evidence="1">
    <location>
        <position position="77"/>
    </location>
    <ligand>
        <name>Na(+)</name>
        <dbReference type="ChEBI" id="CHEBI:29101"/>
        <note>structural</note>
    </ligand>
</feature>
<feature type="binding site" evidence="1">
    <location>
        <position position="80"/>
    </location>
    <ligand>
        <name>Na(+)</name>
        <dbReference type="ChEBI" id="CHEBI:29101"/>
        <note>structural</note>
    </ligand>
</feature>
<sequence length="130" mass="14062">MNLVFLWAALGGAIGSSLRYFVGKMMPSKFLMFESFPLGTFSVNLIGCFIIGFMGHLAAKKVFGDDFGIFFVTGVLGGFTTFSSYGLDTLKLLQKSQYLEAISYVLGTNLLGLIGVAIGWFLAKNFVGVN</sequence>
<name>FLUC_HELPJ</name>
<gene>
    <name evidence="1" type="primary">fluC</name>
    <name evidence="1" type="synonym">crcB</name>
    <name type="ordered locus">jhp_1146</name>
</gene>
<reference key="1">
    <citation type="journal article" date="1999" name="Nature">
        <title>Genomic sequence comparison of two unrelated isolates of the human gastric pathogen Helicobacter pylori.</title>
        <authorList>
            <person name="Alm R.A."/>
            <person name="Ling L.-S.L."/>
            <person name="Moir D.T."/>
            <person name="King B.L."/>
            <person name="Brown E.D."/>
            <person name="Doig P.C."/>
            <person name="Smith D.R."/>
            <person name="Noonan B."/>
            <person name="Guild B.C."/>
            <person name="deJonge B.L."/>
            <person name="Carmel G."/>
            <person name="Tummino P.J."/>
            <person name="Caruso A."/>
            <person name="Uria-Nickelsen M."/>
            <person name="Mills D.M."/>
            <person name="Ives C."/>
            <person name="Gibson R."/>
            <person name="Merberg D."/>
            <person name="Mills S.D."/>
            <person name="Jiang Q."/>
            <person name="Taylor D.E."/>
            <person name="Vovis G.F."/>
            <person name="Trust T.J."/>
        </authorList>
    </citation>
    <scope>NUCLEOTIDE SEQUENCE [LARGE SCALE GENOMIC DNA]</scope>
    <source>
        <strain>J99 / ATCC 700824</strain>
    </source>
</reference>
<proteinExistence type="inferred from homology"/>
<protein>
    <recommendedName>
        <fullName evidence="1">Fluoride-specific ion channel FluC</fullName>
    </recommendedName>
</protein>
<keyword id="KW-0997">Cell inner membrane</keyword>
<keyword id="KW-1003">Cell membrane</keyword>
<keyword id="KW-0407">Ion channel</keyword>
<keyword id="KW-0406">Ion transport</keyword>
<keyword id="KW-0472">Membrane</keyword>
<keyword id="KW-0479">Metal-binding</keyword>
<keyword id="KW-0915">Sodium</keyword>
<keyword id="KW-0812">Transmembrane</keyword>
<keyword id="KW-1133">Transmembrane helix</keyword>
<keyword id="KW-0813">Transport</keyword>
<comment type="function">
    <text evidence="1">Fluoride-specific ion channel. Important for reducing fluoride concentration in the cell, thus reducing its toxicity.</text>
</comment>
<comment type="catalytic activity">
    <reaction evidence="1">
        <text>fluoride(in) = fluoride(out)</text>
        <dbReference type="Rhea" id="RHEA:76159"/>
        <dbReference type="ChEBI" id="CHEBI:17051"/>
    </reaction>
    <physiologicalReaction direction="left-to-right" evidence="1">
        <dbReference type="Rhea" id="RHEA:76160"/>
    </physiologicalReaction>
</comment>
<comment type="activity regulation">
    <text evidence="1">Na(+) is not transported, but it plays an essential structural role and its presence is essential for fluoride channel function.</text>
</comment>
<comment type="subcellular location">
    <subcellularLocation>
        <location evidence="1">Cell inner membrane</location>
        <topology evidence="1">Multi-pass membrane protein</topology>
    </subcellularLocation>
</comment>
<comment type="similarity">
    <text evidence="1">Belongs to the fluoride channel Fluc/FEX (TC 1.A.43) family.</text>
</comment>